<name>IEND3_NEUCR</name>
<gene>
    <name type="ORF">NCU16010</name>
</gene>
<comment type="function">
    <text evidence="1">Mitochondrial DNA endonuclease involved in intron homing.</text>
</comment>
<comment type="subcellular location">
    <subcellularLocation>
        <location evidence="3">Mitochondrion membrane</location>
        <topology evidence="3">Multi-pass membrane protein</topology>
    </subcellularLocation>
</comment>
<comment type="miscellaneous">
    <text>Encoded from partially processed ndh-5 mRNA that terminates with the in-frame coding sequence of the first intron.</text>
</comment>
<comment type="similarity">
    <text evidence="3">In the N-terminal section; belongs to the complex I subunit 5 family.</text>
</comment>
<comment type="similarity">
    <text evidence="3">In the C-terminal section; belongs to the LAGLIDADG endonuclease family.</text>
</comment>
<comment type="sequence caution" evidence="3">
    <conflict type="erroneous gene model prediction">
        <sequence resource="EMBL-CDS" id="CAA28764"/>
    </conflict>
</comment>
<geneLocation type="mitochondrion"/>
<accession>Q35135</accession>
<accession>M1RFR6</accession>
<sequence length="533" mass="60490">MYLSIIILPLLGSIVAGFFGRKVGVSGAQLITCLSVIITTGLAILAFFEVGFNNIPVTINLFRWIDSEWYNILWGFQFDSLTVAMLIPVLIISSLVHIYSISYMSHDPRGRVRGKRVYGDKLSNSGEVLKLKVPSCSWKTMSGWSNYSGTVTSLKMSENKMDNRGSKSVVIDSNSTVKEQRVDGSWSIKSHLMDLRCTLRGFERNRGIKLGFNLQQGWNSAKIPSKQFDFKKKFSTYNSTLRVNPWVWSGLIDGEGSFNIIVDRNKSRKLGWRAQLKFQLSLHTKDLNLLYLLQQYLGGIGSIHLARNRDIVNYSIDSIEDLNKLIIHLENYPLLTQKAADFFLFKQAVKLVNNKAHLTVEGLNQIVNIKASMNLGLSDTLKSEFAGYTPVERPVINCDNVFLDPYWISGFVSAEGNFDVRMPSTNSKLGYRVQLRFRISTLRVDIRLMEKIVEYFGSGKIYKYGGKSAVSLTIVDFTDITNILVPFFNKYPIIGIKLYDYLDWCKIHSLMINRSHLTVEGINSISLLLGRRR</sequence>
<protein>
    <recommendedName>
        <fullName>Probable intron-encoded endonuclease 3</fullName>
        <ecNumber>3.1.-.-</ecNumber>
    </recommendedName>
</protein>
<keyword id="KW-0255">Endonuclease</keyword>
<keyword id="KW-0378">Hydrolase</keyword>
<keyword id="KW-0404">Intron homing</keyword>
<keyword id="KW-0472">Membrane</keyword>
<keyword id="KW-0496">Mitochondrion</keyword>
<keyword id="KW-0540">Nuclease</keyword>
<keyword id="KW-1185">Reference proteome</keyword>
<keyword id="KW-0812">Transmembrane</keyword>
<keyword id="KW-1133">Transmembrane helix</keyword>
<evidence type="ECO:0000250" key="1"/>
<evidence type="ECO:0000255" key="2"/>
<evidence type="ECO:0000305" key="3"/>
<organism>
    <name type="scientific">Neurospora crassa (strain ATCC 24698 / 74-OR23-1A / CBS 708.71 / DSM 1257 / FGSC 987)</name>
    <dbReference type="NCBI Taxonomy" id="367110"/>
    <lineage>
        <taxon>Eukaryota</taxon>
        <taxon>Fungi</taxon>
        <taxon>Dikarya</taxon>
        <taxon>Ascomycota</taxon>
        <taxon>Pezizomycotina</taxon>
        <taxon>Sordariomycetes</taxon>
        <taxon>Sordariomycetidae</taxon>
        <taxon>Sordariales</taxon>
        <taxon>Sordariaceae</taxon>
        <taxon>Neurospora</taxon>
    </lineage>
</organism>
<dbReference type="EC" id="3.1.-.-"/>
<dbReference type="EMBL" id="X05115">
    <property type="protein sequence ID" value="CAA28764.1"/>
    <property type="status" value="ALT_SEQ"/>
    <property type="molecule type" value="Genomic_DNA"/>
</dbReference>
<dbReference type="EMBL" id="KC683708">
    <property type="protein sequence ID" value="AGG16001.1"/>
    <property type="molecule type" value="Genomic_DNA"/>
</dbReference>
<dbReference type="PIR" id="S10841">
    <property type="entry name" value="S10841"/>
</dbReference>
<dbReference type="RefSeq" id="YP_009126713.1">
    <property type="nucleotide sequence ID" value="NC_026614.1"/>
</dbReference>
<dbReference type="SMR" id="Q35135"/>
<dbReference type="FunCoup" id="Q35135">
    <property type="interactions" value="73"/>
</dbReference>
<dbReference type="STRING" id="367110.Q35135"/>
<dbReference type="EnsemblFungi" id="AGG16001">
    <property type="protein sequence ID" value="AGG16001"/>
    <property type="gene ID" value="NCU16010"/>
</dbReference>
<dbReference type="GeneID" id="23681565"/>
<dbReference type="KEGG" id="ncr:NCU16010"/>
<dbReference type="VEuPathDB" id="FungiDB:NCU16010"/>
<dbReference type="InParanoid" id="Q35135"/>
<dbReference type="OrthoDB" id="5412286at2759"/>
<dbReference type="Proteomes" id="UP000001805">
    <property type="component" value="Mitochondrion"/>
</dbReference>
<dbReference type="GO" id="GO:0031966">
    <property type="term" value="C:mitochondrial membrane"/>
    <property type="evidence" value="ECO:0007669"/>
    <property type="project" value="UniProtKB-SubCell"/>
</dbReference>
<dbReference type="GO" id="GO:0045271">
    <property type="term" value="C:respiratory chain complex I"/>
    <property type="evidence" value="ECO:0000318"/>
    <property type="project" value="GO_Central"/>
</dbReference>
<dbReference type="GO" id="GO:0004519">
    <property type="term" value="F:endonuclease activity"/>
    <property type="evidence" value="ECO:0007669"/>
    <property type="project" value="UniProtKB-KW"/>
</dbReference>
<dbReference type="GO" id="GO:0015990">
    <property type="term" value="P:electron transport coupled proton transport"/>
    <property type="evidence" value="ECO:0000318"/>
    <property type="project" value="GO_Central"/>
</dbReference>
<dbReference type="GO" id="GO:0006314">
    <property type="term" value="P:intron homing"/>
    <property type="evidence" value="ECO:0007669"/>
    <property type="project" value="UniProtKB-KW"/>
</dbReference>
<dbReference type="Gene3D" id="3.10.28.10">
    <property type="entry name" value="Homing endonucleases"/>
    <property type="match status" value="2"/>
</dbReference>
<dbReference type="InterPro" id="IPR027434">
    <property type="entry name" value="Homing_endonucl"/>
</dbReference>
<dbReference type="InterPro" id="IPR004860">
    <property type="entry name" value="LAGLIDADG_dom"/>
</dbReference>
<dbReference type="InterPro" id="IPR051289">
    <property type="entry name" value="LAGLIDADG_Endonuclease"/>
</dbReference>
<dbReference type="InterPro" id="IPR001516">
    <property type="entry name" value="Proton_antipo_N"/>
</dbReference>
<dbReference type="PANTHER" id="PTHR36181">
    <property type="entry name" value="INTRON-ENCODED ENDONUCLEASE AI3-RELATED"/>
    <property type="match status" value="1"/>
</dbReference>
<dbReference type="PANTHER" id="PTHR36181:SF4">
    <property type="entry name" value="LAGLIDADG ENDONUCLEASE"/>
    <property type="match status" value="1"/>
</dbReference>
<dbReference type="Pfam" id="PF00961">
    <property type="entry name" value="LAGLIDADG_1"/>
    <property type="match status" value="2"/>
</dbReference>
<dbReference type="Pfam" id="PF00662">
    <property type="entry name" value="Proton_antipo_N"/>
    <property type="match status" value="1"/>
</dbReference>
<dbReference type="SUPFAM" id="SSF55608">
    <property type="entry name" value="Homing endonucleases"/>
    <property type="match status" value="2"/>
</dbReference>
<proteinExistence type="inferred from homology"/>
<reference key="1">
    <citation type="journal article" date="1987" name="Mol. Gen. Genet.">
        <title>Structure and expression of the overlapping ND4L and ND5 genes of Neurospora crassa mitochondria.</title>
        <authorList>
            <person name="Nelson M.A."/>
            <person name="Macino G."/>
        </authorList>
    </citation>
    <scope>NUCLEOTIDE SEQUENCE [GENOMIC DNA]</scope>
    <source>
        <strain>ATCC 24698 / 74-OR23-1A / CBS 708.71 / DSM 1257 / FGSC 987</strain>
    </source>
</reference>
<reference key="2">
    <citation type="journal article" date="2003" name="Nature">
        <title>The genome sequence of the filamentous fungus Neurospora crassa.</title>
        <authorList>
            <person name="Galagan J.E."/>
            <person name="Calvo S.E."/>
            <person name="Borkovich K.A."/>
            <person name="Selker E.U."/>
            <person name="Read N.D."/>
            <person name="Jaffe D.B."/>
            <person name="FitzHugh W."/>
            <person name="Ma L.-J."/>
            <person name="Smirnov S."/>
            <person name="Purcell S."/>
            <person name="Rehman B."/>
            <person name="Elkins T."/>
            <person name="Engels R."/>
            <person name="Wang S."/>
            <person name="Nielsen C.B."/>
            <person name="Butler J."/>
            <person name="Endrizzi M."/>
            <person name="Qui D."/>
            <person name="Ianakiev P."/>
            <person name="Bell-Pedersen D."/>
            <person name="Nelson M.A."/>
            <person name="Werner-Washburne M."/>
            <person name="Selitrennikoff C.P."/>
            <person name="Kinsey J.A."/>
            <person name="Braun E.L."/>
            <person name="Zelter A."/>
            <person name="Schulte U."/>
            <person name="Kothe G.O."/>
            <person name="Jedd G."/>
            <person name="Mewes H.-W."/>
            <person name="Staben C."/>
            <person name="Marcotte E."/>
            <person name="Greenberg D."/>
            <person name="Roy A."/>
            <person name="Foley K."/>
            <person name="Naylor J."/>
            <person name="Stange-Thomann N."/>
            <person name="Barrett R."/>
            <person name="Gnerre S."/>
            <person name="Kamal M."/>
            <person name="Kamvysselis M."/>
            <person name="Mauceli E.W."/>
            <person name="Bielke C."/>
            <person name="Rudd S."/>
            <person name="Frishman D."/>
            <person name="Krystofova S."/>
            <person name="Rasmussen C."/>
            <person name="Metzenberg R.L."/>
            <person name="Perkins D.D."/>
            <person name="Kroken S."/>
            <person name="Cogoni C."/>
            <person name="Macino G."/>
            <person name="Catcheside D.E.A."/>
            <person name="Li W."/>
            <person name="Pratt R.J."/>
            <person name="Osmani S.A."/>
            <person name="DeSouza C.P.C."/>
            <person name="Glass N.L."/>
            <person name="Orbach M.J."/>
            <person name="Berglund J.A."/>
            <person name="Voelker R."/>
            <person name="Yarden O."/>
            <person name="Plamann M."/>
            <person name="Seiler S."/>
            <person name="Dunlap J.C."/>
            <person name="Radford A."/>
            <person name="Aramayo R."/>
            <person name="Natvig D.O."/>
            <person name="Alex L.A."/>
            <person name="Mannhaupt G."/>
            <person name="Ebbole D.J."/>
            <person name="Freitag M."/>
            <person name="Paulsen I."/>
            <person name="Sachs M.S."/>
            <person name="Lander E.S."/>
            <person name="Nusbaum C."/>
            <person name="Birren B.W."/>
        </authorList>
    </citation>
    <scope>NUCLEOTIDE SEQUENCE [LARGE SCALE GENOMIC DNA]</scope>
    <source>
        <strain>ATCC 24698 / 74-OR23-1A / CBS 708.71 / DSM 1257 / FGSC 987</strain>
    </source>
</reference>
<reference key="3">
    <citation type="book" date="2004" name="The Mycota II, Genetics and Biotechnology (2nd edition)">
        <title>Mitochondrial genetics of Neurospora.</title>
        <editorList>
            <person name="Kueck U."/>
        </editorList>
        <authorList>
            <person name="Kennell J.C."/>
            <person name="Collins R.A."/>
            <person name="Griffiths A.J.F."/>
            <person name="Nargang F.E."/>
        </authorList>
    </citation>
    <scope>GENOME REANNOTATION</scope>
    <source>
        <strain>ATCC 24698 / 74-OR23-1A / CBS 708.71 / DSM 1257 / FGSC 987</strain>
    </source>
</reference>
<feature type="chain" id="PRO_0000414735" description="Probable intron-encoded endonuclease 3">
    <location>
        <begin position="1"/>
        <end position="533"/>
    </location>
</feature>
<feature type="transmembrane region" description="Helical" evidence="2">
    <location>
        <begin position="1"/>
        <end position="21"/>
    </location>
</feature>
<feature type="transmembrane region" description="Helical" evidence="2">
    <location>
        <begin position="30"/>
        <end position="50"/>
    </location>
</feature>
<feature type="transmembrane region" description="Helical" evidence="2">
    <location>
        <begin position="81"/>
        <end position="101"/>
    </location>
</feature>
<feature type="region of interest" description="ndh-5 exon 1 encoded">
    <location>
        <begin position="1"/>
        <end position="108"/>
    </location>
</feature>
<feature type="region of interest" description="ndh-5 intron 1 encoded">
    <location>
        <begin position="109"/>
        <end position="533"/>
    </location>
</feature>
<feature type="sequence conflict" description="In Ref. 1; CAA28764." evidence="3" ref="1">
    <original>F</original>
    <variation>L</variation>
    <location>
        <position position="385"/>
    </location>
</feature>
<feature type="sequence conflict" description="In Ref. 1; CAA28764." evidence="3" ref="1">
    <original>D</original>
    <variation>N</variation>
    <location>
        <position position="445"/>
    </location>
</feature>